<reference key="1">
    <citation type="journal article" date="2008" name="Environ. Microbiol.">
        <title>The genome of Erwinia tasmaniensis strain Et1/99, a non-pathogenic bacterium in the genus Erwinia.</title>
        <authorList>
            <person name="Kube M."/>
            <person name="Migdoll A.M."/>
            <person name="Mueller I."/>
            <person name="Kuhl H."/>
            <person name="Beck A."/>
            <person name="Reinhardt R."/>
            <person name="Geider K."/>
        </authorList>
    </citation>
    <scope>NUCLEOTIDE SEQUENCE [LARGE SCALE GENOMIC DNA]</scope>
    <source>
        <strain>DSM 17950 / CFBP 7177 / CIP 109463 / NCPPB 4357 / Et1/99</strain>
    </source>
</reference>
<feature type="chain" id="PRO_1000133077" description="Phosphopentomutase">
    <location>
        <begin position="1"/>
        <end position="407"/>
    </location>
</feature>
<feature type="binding site" evidence="1">
    <location>
        <position position="10"/>
    </location>
    <ligand>
        <name>Mn(2+)</name>
        <dbReference type="ChEBI" id="CHEBI:29035"/>
        <label>1</label>
    </ligand>
</feature>
<feature type="binding site" evidence="1">
    <location>
        <position position="306"/>
    </location>
    <ligand>
        <name>Mn(2+)</name>
        <dbReference type="ChEBI" id="CHEBI:29035"/>
        <label>2</label>
    </ligand>
</feature>
<feature type="binding site" evidence="1">
    <location>
        <position position="311"/>
    </location>
    <ligand>
        <name>Mn(2+)</name>
        <dbReference type="ChEBI" id="CHEBI:29035"/>
        <label>2</label>
    </ligand>
</feature>
<feature type="binding site" evidence="1">
    <location>
        <position position="347"/>
    </location>
    <ligand>
        <name>Mn(2+)</name>
        <dbReference type="ChEBI" id="CHEBI:29035"/>
        <label>1</label>
    </ligand>
</feature>
<feature type="binding site" evidence="1">
    <location>
        <position position="348"/>
    </location>
    <ligand>
        <name>Mn(2+)</name>
        <dbReference type="ChEBI" id="CHEBI:29035"/>
        <label>1</label>
    </ligand>
</feature>
<feature type="binding site" evidence="1">
    <location>
        <position position="359"/>
    </location>
    <ligand>
        <name>Mn(2+)</name>
        <dbReference type="ChEBI" id="CHEBI:29035"/>
        <label>2</label>
    </ligand>
</feature>
<keyword id="KW-0963">Cytoplasm</keyword>
<keyword id="KW-0413">Isomerase</keyword>
<keyword id="KW-0464">Manganese</keyword>
<keyword id="KW-0479">Metal-binding</keyword>
<keyword id="KW-1185">Reference proteome</keyword>
<organism>
    <name type="scientific">Erwinia tasmaniensis (strain DSM 17950 / CFBP 7177 / CIP 109463 / NCPPB 4357 / Et1/99)</name>
    <dbReference type="NCBI Taxonomy" id="465817"/>
    <lineage>
        <taxon>Bacteria</taxon>
        <taxon>Pseudomonadati</taxon>
        <taxon>Pseudomonadota</taxon>
        <taxon>Gammaproteobacteria</taxon>
        <taxon>Enterobacterales</taxon>
        <taxon>Erwiniaceae</taxon>
        <taxon>Erwinia</taxon>
    </lineage>
</organism>
<sequence length="407" mass="43996">MKRAFIMVLDSFGIGSSKDAEKFGDKGSDTLGHIAEACFRGEADKGRKGPLHLPNLTALGLGKAAEASSGKFPPGLDKNAEIIGAYAYASELSSGKDTPSGHWEIAGVPVLFDWGYFSDTENSFPQELLDLLVEKANLPGYLGNCHSSGTVILDQLGAEHMKSGKPIFYTSADSVFQIACHEETFGLERLYALCEIAREALTEGGYNIGRVIARPFVGDKPGHFERTGNRHDLAVEPPAPTVLKKLVDEQGGEVISVGKIADIYAHVGITKKVKATGLDALFDATVGEMKSAPDNSIVFTNFVDFDSAWGHRRDIPGYAAGLELFDRRLPELMALVKEGDILILTADHGCDPSWPGTEHTREHIPVLIFGPGVRPGDYGYRDTFADIGQTLAHYFGLSPMAYGKPFF</sequence>
<comment type="function">
    <text evidence="1">Isomerase that catalyzes the conversion of deoxy-ribose 1-phosphate (dRib-1-P) and ribose 1-phosphate (Rib-1-P) to deoxy-ribose 5-phosphate (dRib-5-P) and ribose 5-phosphate (Rib-5-P), respectively.</text>
</comment>
<comment type="catalytic activity">
    <reaction evidence="1">
        <text>2-deoxy-alpha-D-ribose 1-phosphate = 2-deoxy-D-ribose 5-phosphate</text>
        <dbReference type="Rhea" id="RHEA:27658"/>
        <dbReference type="ChEBI" id="CHEBI:57259"/>
        <dbReference type="ChEBI" id="CHEBI:62877"/>
        <dbReference type="EC" id="5.4.2.7"/>
    </reaction>
</comment>
<comment type="catalytic activity">
    <reaction evidence="1">
        <text>alpha-D-ribose 1-phosphate = D-ribose 5-phosphate</text>
        <dbReference type="Rhea" id="RHEA:18793"/>
        <dbReference type="ChEBI" id="CHEBI:57720"/>
        <dbReference type="ChEBI" id="CHEBI:78346"/>
        <dbReference type="EC" id="5.4.2.7"/>
    </reaction>
</comment>
<comment type="cofactor">
    <cofactor evidence="1">
        <name>Mn(2+)</name>
        <dbReference type="ChEBI" id="CHEBI:29035"/>
    </cofactor>
    <text evidence="1">Binds 2 manganese ions.</text>
</comment>
<comment type="pathway">
    <text evidence="1">Carbohydrate degradation; 2-deoxy-D-ribose 1-phosphate degradation; D-glyceraldehyde 3-phosphate and acetaldehyde from 2-deoxy-alpha-D-ribose 1-phosphate: step 1/2.</text>
</comment>
<comment type="subcellular location">
    <subcellularLocation>
        <location evidence="1">Cytoplasm</location>
    </subcellularLocation>
</comment>
<comment type="similarity">
    <text evidence="1">Belongs to the phosphopentomutase family.</text>
</comment>
<name>DEOB_ERWT9</name>
<gene>
    <name evidence="1" type="primary">deoB</name>
    <name type="ordered locus">ETA_06680</name>
</gene>
<dbReference type="EC" id="5.4.2.7" evidence="1"/>
<dbReference type="EMBL" id="CU468135">
    <property type="protein sequence ID" value="CAO95714.1"/>
    <property type="molecule type" value="Genomic_DNA"/>
</dbReference>
<dbReference type="RefSeq" id="WP_012440416.1">
    <property type="nucleotide sequence ID" value="NC_010694.1"/>
</dbReference>
<dbReference type="SMR" id="B2VH52"/>
<dbReference type="STRING" id="465817.ETA_06680"/>
<dbReference type="KEGG" id="eta:ETA_06680"/>
<dbReference type="eggNOG" id="COG1015">
    <property type="taxonomic scope" value="Bacteria"/>
</dbReference>
<dbReference type="HOGENOM" id="CLU_053861_0_0_6"/>
<dbReference type="OrthoDB" id="9769930at2"/>
<dbReference type="UniPathway" id="UPA00002">
    <property type="reaction ID" value="UER00467"/>
</dbReference>
<dbReference type="Proteomes" id="UP000001726">
    <property type="component" value="Chromosome"/>
</dbReference>
<dbReference type="GO" id="GO:0005829">
    <property type="term" value="C:cytosol"/>
    <property type="evidence" value="ECO:0007669"/>
    <property type="project" value="TreeGrafter"/>
</dbReference>
<dbReference type="GO" id="GO:0000287">
    <property type="term" value="F:magnesium ion binding"/>
    <property type="evidence" value="ECO:0007669"/>
    <property type="project" value="InterPro"/>
</dbReference>
<dbReference type="GO" id="GO:0030145">
    <property type="term" value="F:manganese ion binding"/>
    <property type="evidence" value="ECO:0007669"/>
    <property type="project" value="UniProtKB-UniRule"/>
</dbReference>
<dbReference type="GO" id="GO:0008973">
    <property type="term" value="F:phosphopentomutase activity"/>
    <property type="evidence" value="ECO:0007669"/>
    <property type="project" value="UniProtKB-UniRule"/>
</dbReference>
<dbReference type="GO" id="GO:0006018">
    <property type="term" value="P:2-deoxyribose 1-phosphate catabolic process"/>
    <property type="evidence" value="ECO:0007669"/>
    <property type="project" value="UniProtKB-UniRule"/>
</dbReference>
<dbReference type="GO" id="GO:0006015">
    <property type="term" value="P:5-phosphoribose 1-diphosphate biosynthetic process"/>
    <property type="evidence" value="ECO:0007669"/>
    <property type="project" value="UniProtKB-UniPathway"/>
</dbReference>
<dbReference type="GO" id="GO:0043094">
    <property type="term" value="P:metabolic compound salvage"/>
    <property type="evidence" value="ECO:0007669"/>
    <property type="project" value="InterPro"/>
</dbReference>
<dbReference type="GO" id="GO:0009117">
    <property type="term" value="P:nucleotide metabolic process"/>
    <property type="evidence" value="ECO:0007669"/>
    <property type="project" value="InterPro"/>
</dbReference>
<dbReference type="CDD" id="cd16009">
    <property type="entry name" value="PPM"/>
    <property type="match status" value="1"/>
</dbReference>
<dbReference type="FunFam" id="3.30.70.1250:FF:000001">
    <property type="entry name" value="Phosphopentomutase"/>
    <property type="match status" value="1"/>
</dbReference>
<dbReference type="Gene3D" id="3.40.720.10">
    <property type="entry name" value="Alkaline Phosphatase, subunit A"/>
    <property type="match status" value="1"/>
</dbReference>
<dbReference type="Gene3D" id="3.30.70.1250">
    <property type="entry name" value="Phosphopentomutase"/>
    <property type="match status" value="1"/>
</dbReference>
<dbReference type="HAMAP" id="MF_00740">
    <property type="entry name" value="Phosphopentomut"/>
    <property type="match status" value="1"/>
</dbReference>
<dbReference type="InterPro" id="IPR017850">
    <property type="entry name" value="Alkaline_phosphatase_core_sf"/>
</dbReference>
<dbReference type="InterPro" id="IPR010045">
    <property type="entry name" value="DeoB"/>
</dbReference>
<dbReference type="InterPro" id="IPR006124">
    <property type="entry name" value="Metalloenzyme"/>
</dbReference>
<dbReference type="InterPro" id="IPR024052">
    <property type="entry name" value="Phosphopentomutase_DeoB_cap_sf"/>
</dbReference>
<dbReference type="NCBIfam" id="TIGR01696">
    <property type="entry name" value="deoB"/>
    <property type="match status" value="1"/>
</dbReference>
<dbReference type="NCBIfam" id="NF003766">
    <property type="entry name" value="PRK05362.1"/>
    <property type="match status" value="1"/>
</dbReference>
<dbReference type="PANTHER" id="PTHR21110">
    <property type="entry name" value="PHOSPHOPENTOMUTASE"/>
    <property type="match status" value="1"/>
</dbReference>
<dbReference type="PANTHER" id="PTHR21110:SF0">
    <property type="entry name" value="PHOSPHOPENTOMUTASE"/>
    <property type="match status" value="1"/>
</dbReference>
<dbReference type="Pfam" id="PF01676">
    <property type="entry name" value="Metalloenzyme"/>
    <property type="match status" value="1"/>
</dbReference>
<dbReference type="PIRSF" id="PIRSF001491">
    <property type="entry name" value="Ppentomutase"/>
    <property type="match status" value="1"/>
</dbReference>
<dbReference type="SUPFAM" id="SSF53649">
    <property type="entry name" value="Alkaline phosphatase-like"/>
    <property type="match status" value="1"/>
</dbReference>
<dbReference type="SUPFAM" id="SSF143856">
    <property type="entry name" value="DeoB insert domain-like"/>
    <property type="match status" value="1"/>
</dbReference>
<proteinExistence type="inferred from homology"/>
<protein>
    <recommendedName>
        <fullName evidence="1">Phosphopentomutase</fullName>
        <ecNumber evidence="1">5.4.2.7</ecNumber>
    </recommendedName>
    <alternativeName>
        <fullName evidence="1">Phosphodeoxyribomutase</fullName>
    </alternativeName>
</protein>
<evidence type="ECO:0000255" key="1">
    <source>
        <dbReference type="HAMAP-Rule" id="MF_00740"/>
    </source>
</evidence>
<accession>B2VH52</accession>